<protein>
    <recommendedName>
        <fullName evidence="1">Uracil-DNA glycosylase</fullName>
        <shortName evidence="1">UDG</shortName>
        <ecNumber evidence="1">3.2.2.27</ecNumber>
    </recommendedName>
</protein>
<gene>
    <name evidence="1" type="primary">ung</name>
    <name type="ordered locus">BPUM_3444</name>
</gene>
<accession>A8FIM7</accession>
<evidence type="ECO:0000255" key="1">
    <source>
        <dbReference type="HAMAP-Rule" id="MF_00148"/>
    </source>
</evidence>
<name>UNG_BACP2</name>
<keyword id="KW-0963">Cytoplasm</keyword>
<keyword id="KW-0227">DNA damage</keyword>
<keyword id="KW-0234">DNA repair</keyword>
<keyword id="KW-0378">Hydrolase</keyword>
<proteinExistence type="inferred from homology"/>
<reference key="1">
    <citation type="journal article" date="2007" name="PLoS ONE">
        <title>Paradoxical DNA repair and peroxide resistance gene conservation in Bacillus pumilus SAFR-032.</title>
        <authorList>
            <person name="Gioia J."/>
            <person name="Yerrapragada S."/>
            <person name="Qin X."/>
            <person name="Jiang H."/>
            <person name="Igboeli O.C."/>
            <person name="Muzny D."/>
            <person name="Dugan-Rocha S."/>
            <person name="Ding Y."/>
            <person name="Hawes A."/>
            <person name="Liu W."/>
            <person name="Perez L."/>
            <person name="Kovar C."/>
            <person name="Dinh H."/>
            <person name="Lee S."/>
            <person name="Nazareth L."/>
            <person name="Blyth P."/>
            <person name="Holder M."/>
            <person name="Buhay C."/>
            <person name="Tirumalai M.R."/>
            <person name="Liu Y."/>
            <person name="Dasgupta I."/>
            <person name="Bokhetache L."/>
            <person name="Fujita M."/>
            <person name="Karouia F."/>
            <person name="Eswara Moorthy P."/>
            <person name="Siefert J."/>
            <person name="Uzman A."/>
            <person name="Buzumbo P."/>
            <person name="Verma A."/>
            <person name="Zwiya H."/>
            <person name="McWilliams B.D."/>
            <person name="Olowu A."/>
            <person name="Clinkenbeard K.D."/>
            <person name="Newcombe D."/>
            <person name="Golebiewski L."/>
            <person name="Petrosino J.F."/>
            <person name="Nicholson W.L."/>
            <person name="Fox G.E."/>
            <person name="Venkateswaran K."/>
            <person name="Highlander S.K."/>
            <person name="Weinstock G.M."/>
        </authorList>
    </citation>
    <scope>NUCLEOTIDE SEQUENCE [LARGE SCALE GENOMIC DNA]</scope>
    <source>
        <strain>SAFR-032</strain>
    </source>
</reference>
<comment type="function">
    <text evidence="1">Excises uracil residues from the DNA which can arise as a result of misincorporation of dUMP residues by DNA polymerase or due to deamination of cytosine.</text>
</comment>
<comment type="catalytic activity">
    <reaction evidence="1">
        <text>Hydrolyzes single-stranded DNA or mismatched double-stranded DNA and polynucleotides, releasing free uracil.</text>
        <dbReference type="EC" id="3.2.2.27"/>
    </reaction>
</comment>
<comment type="subcellular location">
    <subcellularLocation>
        <location evidence="1">Cytoplasm</location>
    </subcellularLocation>
</comment>
<comment type="similarity">
    <text evidence="1">Belongs to the uracil-DNA glycosylase (UDG) superfamily. UNG family.</text>
</comment>
<feature type="chain" id="PRO_1000058124" description="Uracil-DNA glycosylase">
    <location>
        <begin position="1"/>
        <end position="226"/>
    </location>
</feature>
<feature type="active site" description="Proton acceptor" evidence="1">
    <location>
        <position position="65"/>
    </location>
</feature>
<sequence>MKPFLNDSWWAVMKSEFEQPYYQELREWMKEEYRTQTVFPKPDDVYRALHLTSYEEVKVVILGQDPYHGPGQAHGLSFSVQPGVKHPPSLRNIFQELKDDLGCPVPNHGSLVSWAEQGVLLLNTVLTVRKGEANSHKGKGWERVTDRVIDALNERDQPVVFVLWGRHAQNKKERIDQNKHYIIESPHPSPFSARNGFFGSRPFSKVNAYLKQMGTEEINWCIQDIE</sequence>
<organism>
    <name type="scientific">Bacillus pumilus (strain SAFR-032)</name>
    <dbReference type="NCBI Taxonomy" id="315750"/>
    <lineage>
        <taxon>Bacteria</taxon>
        <taxon>Bacillati</taxon>
        <taxon>Bacillota</taxon>
        <taxon>Bacilli</taxon>
        <taxon>Bacillales</taxon>
        <taxon>Bacillaceae</taxon>
        <taxon>Bacillus</taxon>
    </lineage>
</organism>
<dbReference type="EC" id="3.2.2.27" evidence="1"/>
<dbReference type="EMBL" id="CP000813">
    <property type="protein sequence ID" value="ABV64094.1"/>
    <property type="molecule type" value="Genomic_DNA"/>
</dbReference>
<dbReference type="RefSeq" id="WP_012011651.1">
    <property type="nucleotide sequence ID" value="NZ_VEIS01000002.1"/>
</dbReference>
<dbReference type="SMR" id="A8FIM7"/>
<dbReference type="STRING" id="315750.BPUM_3444"/>
<dbReference type="GeneID" id="5622734"/>
<dbReference type="KEGG" id="bpu:BPUM_3444"/>
<dbReference type="eggNOG" id="COG0692">
    <property type="taxonomic scope" value="Bacteria"/>
</dbReference>
<dbReference type="HOGENOM" id="CLU_032162_3_0_9"/>
<dbReference type="OrthoDB" id="9804372at2"/>
<dbReference type="Proteomes" id="UP000001355">
    <property type="component" value="Chromosome"/>
</dbReference>
<dbReference type="GO" id="GO:0005737">
    <property type="term" value="C:cytoplasm"/>
    <property type="evidence" value="ECO:0007669"/>
    <property type="project" value="UniProtKB-SubCell"/>
</dbReference>
<dbReference type="GO" id="GO:0004844">
    <property type="term" value="F:uracil DNA N-glycosylase activity"/>
    <property type="evidence" value="ECO:0007669"/>
    <property type="project" value="UniProtKB-UniRule"/>
</dbReference>
<dbReference type="GO" id="GO:0097510">
    <property type="term" value="P:base-excision repair, AP site formation via deaminated base removal"/>
    <property type="evidence" value="ECO:0007669"/>
    <property type="project" value="TreeGrafter"/>
</dbReference>
<dbReference type="CDD" id="cd10027">
    <property type="entry name" value="UDG-F1-like"/>
    <property type="match status" value="1"/>
</dbReference>
<dbReference type="FunFam" id="3.40.470.10:FF:000001">
    <property type="entry name" value="Uracil-DNA glycosylase"/>
    <property type="match status" value="1"/>
</dbReference>
<dbReference type="Gene3D" id="3.40.470.10">
    <property type="entry name" value="Uracil-DNA glycosylase-like domain"/>
    <property type="match status" value="1"/>
</dbReference>
<dbReference type="HAMAP" id="MF_00148">
    <property type="entry name" value="UDG"/>
    <property type="match status" value="1"/>
</dbReference>
<dbReference type="InterPro" id="IPR002043">
    <property type="entry name" value="UDG_fam1"/>
</dbReference>
<dbReference type="InterPro" id="IPR018085">
    <property type="entry name" value="Ura-DNA_Glyclase_AS"/>
</dbReference>
<dbReference type="InterPro" id="IPR005122">
    <property type="entry name" value="Uracil-DNA_glycosylase-like"/>
</dbReference>
<dbReference type="InterPro" id="IPR036895">
    <property type="entry name" value="Uracil-DNA_glycosylase-like_sf"/>
</dbReference>
<dbReference type="NCBIfam" id="NF003588">
    <property type="entry name" value="PRK05254.1-1"/>
    <property type="match status" value="1"/>
</dbReference>
<dbReference type="NCBIfam" id="NF003589">
    <property type="entry name" value="PRK05254.1-2"/>
    <property type="match status" value="1"/>
</dbReference>
<dbReference type="NCBIfam" id="NF003591">
    <property type="entry name" value="PRK05254.1-4"/>
    <property type="match status" value="1"/>
</dbReference>
<dbReference type="NCBIfam" id="NF003592">
    <property type="entry name" value="PRK05254.1-5"/>
    <property type="match status" value="1"/>
</dbReference>
<dbReference type="NCBIfam" id="TIGR00628">
    <property type="entry name" value="ung"/>
    <property type="match status" value="1"/>
</dbReference>
<dbReference type="PANTHER" id="PTHR11264">
    <property type="entry name" value="URACIL-DNA GLYCOSYLASE"/>
    <property type="match status" value="1"/>
</dbReference>
<dbReference type="PANTHER" id="PTHR11264:SF0">
    <property type="entry name" value="URACIL-DNA GLYCOSYLASE"/>
    <property type="match status" value="1"/>
</dbReference>
<dbReference type="Pfam" id="PF03167">
    <property type="entry name" value="UDG"/>
    <property type="match status" value="1"/>
</dbReference>
<dbReference type="SMART" id="SM00986">
    <property type="entry name" value="UDG"/>
    <property type="match status" value="1"/>
</dbReference>
<dbReference type="SMART" id="SM00987">
    <property type="entry name" value="UreE_C"/>
    <property type="match status" value="1"/>
</dbReference>
<dbReference type="SUPFAM" id="SSF52141">
    <property type="entry name" value="Uracil-DNA glycosylase-like"/>
    <property type="match status" value="1"/>
</dbReference>
<dbReference type="PROSITE" id="PS00130">
    <property type="entry name" value="U_DNA_GLYCOSYLASE"/>
    <property type="match status" value="1"/>
</dbReference>